<proteinExistence type="inferred from homology"/>
<protein>
    <recommendedName>
        <fullName evidence="1">Glycine cleavage system H protein</fullName>
    </recommendedName>
</protein>
<sequence length="129" mass="13718">MAFEFPASFRFADSHEYANADGELVRVGISAFAVDQLGDIVFVDLPDVGDSLDKGATFGSVESVKAVEDMYAPVAGEVVQRNEAVLASPEELQNDPHGEGWLLVLRPSDPSQLEALMDAGTYGTKVNAG</sequence>
<reference key="1">
    <citation type="journal article" date="2003" name="Nature">
        <title>The genome of a motile marine Synechococcus.</title>
        <authorList>
            <person name="Palenik B."/>
            <person name="Brahamsha B."/>
            <person name="Larimer F.W."/>
            <person name="Land M.L."/>
            <person name="Hauser L."/>
            <person name="Chain P."/>
            <person name="Lamerdin J.E."/>
            <person name="Regala W."/>
            <person name="Allen E.E."/>
            <person name="McCarren J."/>
            <person name="Paulsen I.T."/>
            <person name="Dufresne A."/>
            <person name="Partensky F."/>
            <person name="Webb E.A."/>
            <person name="Waterbury J."/>
        </authorList>
    </citation>
    <scope>NUCLEOTIDE SEQUENCE [LARGE SCALE GENOMIC DNA]</scope>
    <source>
        <strain>WH8102</strain>
    </source>
</reference>
<evidence type="ECO:0000255" key="1">
    <source>
        <dbReference type="HAMAP-Rule" id="MF_00272"/>
    </source>
</evidence>
<evidence type="ECO:0000255" key="2">
    <source>
        <dbReference type="PROSITE-ProRule" id="PRU01066"/>
    </source>
</evidence>
<feature type="chain" id="PRO_0000302455" description="Glycine cleavage system H protein">
    <location>
        <begin position="1"/>
        <end position="129"/>
    </location>
</feature>
<feature type="domain" description="Lipoyl-binding" evidence="2">
    <location>
        <begin position="24"/>
        <end position="106"/>
    </location>
</feature>
<feature type="modified residue" description="N6-lipoyllysine" evidence="1">
    <location>
        <position position="65"/>
    </location>
</feature>
<gene>
    <name evidence="1" type="primary">gcvH</name>
    <name type="ordered locus">SYNW2375</name>
</gene>
<comment type="function">
    <text evidence="1">The glycine cleavage system catalyzes the degradation of glycine. The H protein shuttles the methylamine group of glycine from the P protein to the T protein.</text>
</comment>
<comment type="cofactor">
    <cofactor evidence="1">
        <name>(R)-lipoate</name>
        <dbReference type="ChEBI" id="CHEBI:83088"/>
    </cofactor>
    <text evidence="1">Binds 1 lipoyl cofactor covalently.</text>
</comment>
<comment type="subunit">
    <text evidence="1">The glycine cleavage system is composed of four proteins: P, T, L and H.</text>
</comment>
<comment type="similarity">
    <text evidence="1">Belongs to the GcvH family.</text>
</comment>
<keyword id="KW-0450">Lipoyl</keyword>
<organism>
    <name type="scientific">Parasynechococcus marenigrum (strain WH8102)</name>
    <dbReference type="NCBI Taxonomy" id="84588"/>
    <lineage>
        <taxon>Bacteria</taxon>
        <taxon>Bacillati</taxon>
        <taxon>Cyanobacteriota</taxon>
        <taxon>Cyanophyceae</taxon>
        <taxon>Synechococcales</taxon>
        <taxon>Prochlorococcaceae</taxon>
        <taxon>Parasynechococcus</taxon>
        <taxon>Parasynechococcus marenigrum</taxon>
    </lineage>
</organism>
<accession>Q7TTS3</accession>
<name>GCSH_PARMW</name>
<dbReference type="EMBL" id="BX569695">
    <property type="protein sequence ID" value="CAE08890.1"/>
    <property type="molecule type" value="Genomic_DNA"/>
</dbReference>
<dbReference type="RefSeq" id="WP_011129228.1">
    <property type="nucleotide sequence ID" value="NC_005070.1"/>
</dbReference>
<dbReference type="SMR" id="Q7TTS3"/>
<dbReference type="STRING" id="84588.SYNW2375"/>
<dbReference type="KEGG" id="syw:SYNW2375"/>
<dbReference type="eggNOG" id="COG0509">
    <property type="taxonomic scope" value="Bacteria"/>
</dbReference>
<dbReference type="HOGENOM" id="CLU_097408_2_0_3"/>
<dbReference type="Proteomes" id="UP000001422">
    <property type="component" value="Chromosome"/>
</dbReference>
<dbReference type="GO" id="GO:0005829">
    <property type="term" value="C:cytosol"/>
    <property type="evidence" value="ECO:0007669"/>
    <property type="project" value="TreeGrafter"/>
</dbReference>
<dbReference type="GO" id="GO:0005960">
    <property type="term" value="C:glycine cleavage complex"/>
    <property type="evidence" value="ECO:0007669"/>
    <property type="project" value="InterPro"/>
</dbReference>
<dbReference type="GO" id="GO:0019464">
    <property type="term" value="P:glycine decarboxylation via glycine cleavage system"/>
    <property type="evidence" value="ECO:0007669"/>
    <property type="project" value="UniProtKB-UniRule"/>
</dbReference>
<dbReference type="CDD" id="cd06848">
    <property type="entry name" value="GCS_H"/>
    <property type="match status" value="1"/>
</dbReference>
<dbReference type="Gene3D" id="2.40.50.100">
    <property type="match status" value="1"/>
</dbReference>
<dbReference type="HAMAP" id="MF_00272">
    <property type="entry name" value="GcvH"/>
    <property type="match status" value="1"/>
</dbReference>
<dbReference type="InterPro" id="IPR003016">
    <property type="entry name" value="2-oxoA_DH_lipoyl-BS"/>
</dbReference>
<dbReference type="InterPro" id="IPR000089">
    <property type="entry name" value="Biotin_lipoyl"/>
</dbReference>
<dbReference type="InterPro" id="IPR002930">
    <property type="entry name" value="GCV_H"/>
</dbReference>
<dbReference type="InterPro" id="IPR033753">
    <property type="entry name" value="GCV_H/Fam206"/>
</dbReference>
<dbReference type="InterPro" id="IPR017453">
    <property type="entry name" value="GCV_H_sub"/>
</dbReference>
<dbReference type="InterPro" id="IPR011053">
    <property type="entry name" value="Single_hybrid_motif"/>
</dbReference>
<dbReference type="NCBIfam" id="TIGR00527">
    <property type="entry name" value="gcvH"/>
    <property type="match status" value="1"/>
</dbReference>
<dbReference type="NCBIfam" id="NF002270">
    <property type="entry name" value="PRK01202.1"/>
    <property type="match status" value="1"/>
</dbReference>
<dbReference type="PANTHER" id="PTHR11715">
    <property type="entry name" value="GLYCINE CLEAVAGE SYSTEM H PROTEIN"/>
    <property type="match status" value="1"/>
</dbReference>
<dbReference type="PANTHER" id="PTHR11715:SF3">
    <property type="entry name" value="GLYCINE CLEAVAGE SYSTEM H PROTEIN-RELATED"/>
    <property type="match status" value="1"/>
</dbReference>
<dbReference type="Pfam" id="PF01597">
    <property type="entry name" value="GCV_H"/>
    <property type="match status" value="1"/>
</dbReference>
<dbReference type="SUPFAM" id="SSF51230">
    <property type="entry name" value="Single hybrid motif"/>
    <property type="match status" value="1"/>
</dbReference>
<dbReference type="PROSITE" id="PS50968">
    <property type="entry name" value="BIOTINYL_LIPOYL"/>
    <property type="match status" value="1"/>
</dbReference>
<dbReference type="PROSITE" id="PS00189">
    <property type="entry name" value="LIPOYL"/>
    <property type="match status" value="1"/>
</dbReference>